<reference key="1">
    <citation type="journal article" date="2005" name="Virus Res.">
        <title>Complete genome sequence of an Ebola virus (Sudan species) responsible for a 2000 outbreak of human disease in Uganda.</title>
        <authorList>
            <person name="Sanchez A."/>
            <person name="Rollin P.E."/>
        </authorList>
    </citation>
    <scope>NUCLEOTIDE SEQUENCE [GENOMIC RNA]</scope>
</reference>
<accession>Q5XX01</accession>
<dbReference type="EC" id="2.7.7.48" evidence="3"/>
<dbReference type="EC" id="3.6.1.-" evidence="2"/>
<dbReference type="EC" id="2.7.7.88" evidence="2"/>
<dbReference type="EC" id="2.1.1.375" evidence="2"/>
<dbReference type="EMBL" id="AY729654">
    <property type="protein sequence ID" value="AAU43890.1"/>
    <property type="molecule type" value="Genomic_RNA"/>
</dbReference>
<dbReference type="RefSeq" id="YP_138527.1">
    <property type="nucleotide sequence ID" value="NC_006432.1"/>
</dbReference>
<dbReference type="PDB" id="6YU8">
    <property type="method" value="X-ray"/>
    <property type="resolution" value="1.84 A"/>
    <property type="chains" value="A=1741-2046"/>
</dbReference>
<dbReference type="PDBsum" id="6YU8"/>
<dbReference type="SMR" id="Q5XX01"/>
<dbReference type="IntAct" id="Q5XX01">
    <property type="interactions" value="1"/>
</dbReference>
<dbReference type="ABCD" id="Q5XX01">
    <property type="antibodies" value="1 sequenced antibody"/>
</dbReference>
<dbReference type="GeneID" id="3160771"/>
<dbReference type="KEGG" id="vg:3160771"/>
<dbReference type="Proteomes" id="UP000000277">
    <property type="component" value="Segment"/>
</dbReference>
<dbReference type="GO" id="GO:0030430">
    <property type="term" value="C:host cell cytoplasm"/>
    <property type="evidence" value="ECO:0007669"/>
    <property type="project" value="UniProtKB-SubCell"/>
</dbReference>
<dbReference type="GO" id="GO:0044423">
    <property type="term" value="C:virion component"/>
    <property type="evidence" value="ECO:0007669"/>
    <property type="project" value="UniProtKB-KW"/>
</dbReference>
<dbReference type="GO" id="GO:0005524">
    <property type="term" value="F:ATP binding"/>
    <property type="evidence" value="ECO:0007669"/>
    <property type="project" value="UniProtKB-KW"/>
</dbReference>
<dbReference type="GO" id="GO:0003924">
    <property type="term" value="F:GTPase activity"/>
    <property type="evidence" value="ECO:0007669"/>
    <property type="project" value="RHEA"/>
</dbReference>
<dbReference type="GO" id="GO:0004482">
    <property type="term" value="F:mRNA 5'-cap (guanine-N7-)-methyltransferase activity"/>
    <property type="evidence" value="ECO:0007669"/>
    <property type="project" value="InterPro"/>
</dbReference>
<dbReference type="GO" id="GO:0003968">
    <property type="term" value="F:RNA-directed RNA polymerase activity"/>
    <property type="evidence" value="ECO:0007669"/>
    <property type="project" value="UniProtKB-KW"/>
</dbReference>
<dbReference type="GO" id="GO:0039689">
    <property type="term" value="P:negative stranded viral RNA replication"/>
    <property type="evidence" value="ECO:0000250"/>
    <property type="project" value="UniProtKB"/>
</dbReference>
<dbReference type="GO" id="GO:0039697">
    <property type="term" value="P:negative stranded viral RNA transcription"/>
    <property type="evidence" value="ECO:0000250"/>
    <property type="project" value="UniProtKB"/>
</dbReference>
<dbReference type="InterPro" id="IPR039530">
    <property type="entry name" value="L_methyltransferase_rhabdo"/>
</dbReference>
<dbReference type="InterPro" id="IPR039736">
    <property type="entry name" value="L_poly_C"/>
</dbReference>
<dbReference type="InterPro" id="IPR026890">
    <property type="entry name" value="Mononeg_mRNAcap"/>
</dbReference>
<dbReference type="InterPro" id="IPR014023">
    <property type="entry name" value="Mononeg_RNA_pol_cat"/>
</dbReference>
<dbReference type="InterPro" id="IPR025786">
    <property type="entry name" value="Mononega_L_MeTrfase"/>
</dbReference>
<dbReference type="InterPro" id="IPR017235">
    <property type="entry name" value="RNA-dir_pol_L_filovirus"/>
</dbReference>
<dbReference type="NCBIfam" id="TIGR04198">
    <property type="entry name" value="paramyx_RNAcap"/>
    <property type="match status" value="1"/>
</dbReference>
<dbReference type="Pfam" id="PF14314">
    <property type="entry name" value="Methyltrans_Mon_2nd"/>
    <property type="match status" value="1"/>
</dbReference>
<dbReference type="Pfam" id="PF14318">
    <property type="entry name" value="Mononeg_mRNAcap"/>
    <property type="match status" value="1"/>
</dbReference>
<dbReference type="Pfam" id="PF00946">
    <property type="entry name" value="Mononeg_RNA_pol"/>
    <property type="match status" value="1"/>
</dbReference>
<dbReference type="PIRSF" id="PIRSF037548">
    <property type="entry name" value="RNA_pol_Filoviridae"/>
    <property type="match status" value="1"/>
</dbReference>
<dbReference type="PROSITE" id="PS50526">
    <property type="entry name" value="RDRP_SSRNA_NEG_NONSEG"/>
    <property type="match status" value="1"/>
</dbReference>
<dbReference type="PROSITE" id="PS51590">
    <property type="entry name" value="SAM_MT_MNV_L"/>
    <property type="match status" value="1"/>
</dbReference>
<gene>
    <name type="primary">L</name>
</gene>
<protein>
    <recommendedName>
        <fullName>RNA-directed RNA polymerase L</fullName>
        <shortName>Protein L</shortName>
    </recommendedName>
    <alternativeName>
        <fullName>Large structural protein</fullName>
    </alternativeName>
    <alternativeName>
        <fullName>Replicase</fullName>
    </alternativeName>
    <alternativeName>
        <fullName>Transcriptase</fullName>
    </alternativeName>
    <domain>
        <recommendedName>
            <fullName>RNA-directed RNA polymerase</fullName>
            <ecNumber evidence="3">2.7.7.48</ecNumber>
        </recommendedName>
    </domain>
    <domain>
        <recommendedName>
            <fullName evidence="2">GTP phosphohydrolase</fullName>
            <ecNumber evidence="2">3.6.1.-</ecNumber>
        </recommendedName>
    </domain>
    <domain>
        <recommendedName>
            <fullName evidence="7">GDP polyribonucleotidyltransferase</fullName>
            <ecNumber evidence="2">2.7.7.88</ecNumber>
        </recommendedName>
        <alternativeName>
            <fullName evidence="7">PRNTase</fullName>
        </alternativeName>
    </domain>
    <domain>
        <recommendedName>
            <fullName evidence="7">mRNA cap methyltransferase</fullName>
            <ecNumber evidence="2">2.1.1.375</ecNumber>
        </recommendedName>
        <alternativeName>
            <fullName evidence="2">mRNA (guanine-N(7)-)-methyltransferase</fullName>
            <shortName evidence="2">G-N7-MTase</shortName>
        </alternativeName>
        <alternativeName>
            <fullName evidence="2">mRNA (nucleoside-2'-O-)-methyltransferase</fullName>
            <shortName evidence="2">N1-2'-O-MTase</shortName>
        </alternativeName>
    </domain>
</protein>
<proteinExistence type="evidence at protein level"/>
<sequence length="2210" mass="251294">MMATQHTQYPDARLSSPIVLDQCDLVTRACGLYSEYSLNPKLKTCRLPKHIYRLKYDTIVLRFISDVPVATIPIDYIAPMLINVLADSKNVPLEPPCLSFLDEIVNYTVQDAAFLNYYMNQIKTQEGVITDQLKQNIRRVIHKNRYLSALFFWHDLAILTRRGRMNRGNVRSTWFVTNEVVDILGYGDYIFWKIPIALLPMNTANVPHASTDWYQPNIFKEAIQGHTHIISVSTAEVLIMCKDLVTSRFNTLLIAELARLEDPVSADYPLVDNIQSLYNAGDYLLSILGSEGYKIIKYLEPLCLAKIQLCSQYTERKGRFLTQMHLAVIQTLRELLLNRGLKKSQLSKIREFHQLLLRLRSTPQQLCELFSIQKHWGHPVLHSEKAIQKVKNHATVLKALRPIIIFETYCVFKYSVAKHFFDSQGTWYSVISDRCLTPGLNSYIRRNQFPPLPMIKDLLWEFYHLDHPPLFSTKIISDLSIFIKDRATAVEQTCWDAVFEPNVLGYSPPYRFNTKRVPEQFLEQEDFSIESVLQYAQELRYLLPQNRNFSFSLKEKELNVGRTFGKLPYLTRNVQTLCEALLADGLAKAFPSNMMVVTEREQKESLLHQASWHHTSDDFGEHATVRGSSFVTDLEKYNLAFRYEFTAPFIKYCNQCYGVRNVFDWMHFLIPQCYMHVSDYYNPPHNVTLENREYPPEGPSAYRGHLGGIEGLQQKLWTSISCAQISLVEIKTGFKLRSAVMGDNQCITVLSVFPLESSPNEQERCAEDNAARVAASLAKVTSACGIFLKPDETFVHSGFIYFGKKQYLNGIQLPQSLKTAARMAPLSDAIFDDLQGTLASIGTAFERSISETRHILPCRVAAAFHTYFSVRILQHHHLGFHKGSDLGQLAINKPLDFGTIALSLAVPQVLGGLSFLNPEKCLYRNLGDPVTSGLFQLKHYLSMVGMSDIFHALIAKSPGNCSAIDFVLNPGGLNVPGSQDLTSFLRQIVRRSITLSARNKLINTLFHASADLEDELVCKWLLSSTPVMSRFAADIFSRTPSGKRLQILGYLEGTRTLLASKMISNNAETPILERLRKITLQRWNLWFSYLDHCDPALMEAIQPIKCTVDIAQILREYSWAHILDGRQLIGATLPCIPEQFQTTWLKPYEQCVECSSTNNSSPYVSVALKRNVVSAWPDASRLGWTIGDGIPYIGSRTEDKIGQPAIKPRCPSAALREAIELTSRLTWVTQGSANSDQLIRPFLEARVNLSVQEILQMTPSHYSGNIVHRYNDQYSPHSFMANRMSNTATRLMVSTNTLGEFSGGGQAARDSNIIFQNVINFAVALYDIRFRNTCTSSIQYHRAHIHLTNCCTREVPAQYLTYTTTLNLDLSKYRNNELIYDSDPLRGGLNCNLSIDSPLMKGPRLNIIEDDLIRLPHLSGWELAKTVLQSIISDSSNSSTDPISSGETRSFTTHFLTYPKIGLLYSFGALISFYLGNTILCTKKIGLTEFLYYLQNQIHNLSHRSLRIFKPTFRHSSVMSRLMDIDPNFSIYIGGTAGDRGLSDAARLFLRIAISTFLSFVEEWVIFRKANIPLWVIYPLEGQRSDPPGEFLNRVKSLIVGTEDDKNKGSILSRSGEKCSSNLVYNCKSTASNFFHASLAYWRGRHRPKKTIGATNATTAPHIILPLGNSDRPPGLDLNRNNDTFIPTRIKQIVQGDSRNDRTTTTRFPPKSRSTPTSATEPPTKMYEGSTTHQGKLTDTHLDEDHNAKEFPSNPHRLVVPFFKLTKDGEYSIEPSPEESRSNIKGLLQHLRTMVDTTIYCRFTGIVSSMHYKLDEVLWEYNKFESAVTLAEGEGSGALLLIQKYGVKKLFLNTLATEHSIESEVISGYTTPRMLLPIMPKTHRGELEVILNNSASQITDITHRDWFSNQKNRIPNDADIITMDAETTENLDRSRLYEAVYTIICNHINPKTLKVVILKVFLSDLDGMCWINNYLAPMFGSGYLIKPITSSAKSSEWYLCLSNLLSTLRTTQHQTQANCLHVVQCALQQQVQRGSYWLSHLTKYTTSRLHNSYIAFGFPSLEKVLYHRYNLVDSRNGPLVSITRHLALLQTEIRELVTDYNQLRQSRTQTYHFIKTSKGRITKLVNDYLRFELVIRALKNNSTWHHELYLLPELIGVCHRFNHTRNCTCSERFLVQTLYLHRMSDAEIKLMDRLTSLVNMFPEGFRSSSV</sequence>
<organismHost>
    <name type="scientific">Epomops franqueti</name>
    <name type="common">Franquet's epauletted fruit bat</name>
    <name type="synonym">Epomophorus franqueti</name>
    <dbReference type="NCBI Taxonomy" id="77231"/>
</organismHost>
<organismHost>
    <name type="scientific">Homo sapiens</name>
    <name type="common">Human</name>
    <dbReference type="NCBI Taxonomy" id="9606"/>
</organismHost>
<organismHost>
    <name type="scientific">Myonycteris torquata</name>
    <name type="common">Little collared fruit bat</name>
    <dbReference type="NCBI Taxonomy" id="77243"/>
</organismHost>
<feature type="chain" id="PRO_0000245049" description="RNA-directed RNA polymerase L">
    <location>
        <begin position="1"/>
        <end position="2210"/>
    </location>
</feature>
<feature type="domain" description="RdRp catalytic" evidence="4">
    <location>
        <begin position="626"/>
        <end position="810"/>
    </location>
</feature>
<feature type="domain" description="Mononegavirus-type SAM-dependent 2'-O-MTase" evidence="5">
    <location>
        <begin position="1802"/>
        <end position="2000"/>
    </location>
</feature>
<feature type="region of interest" description="Disordered" evidence="6">
    <location>
        <begin position="1694"/>
        <end position="1736"/>
    </location>
</feature>
<feature type="compositionally biased region" description="Polar residues" evidence="6">
    <location>
        <begin position="1705"/>
        <end position="1721"/>
    </location>
</feature>
<feature type="strand" evidence="8">
    <location>
        <begin position="1757"/>
        <end position="1762"/>
    </location>
</feature>
<feature type="helix" evidence="8">
    <location>
        <begin position="1777"/>
        <end position="1793"/>
    </location>
</feature>
<feature type="helix" evidence="8">
    <location>
        <begin position="1812"/>
        <end position="1817"/>
    </location>
</feature>
<feature type="turn" evidence="8">
    <location>
        <begin position="1818"/>
        <end position="1820"/>
    </location>
</feature>
<feature type="strand" evidence="8">
    <location>
        <begin position="1825"/>
        <end position="1831"/>
    </location>
</feature>
<feature type="helix" evidence="8">
    <location>
        <begin position="1836"/>
        <end position="1843"/>
    </location>
</feature>
<feature type="strand" evidence="8">
    <location>
        <begin position="1848"/>
        <end position="1853"/>
    </location>
</feature>
<feature type="helix" evidence="8">
    <location>
        <begin position="1873"/>
        <end position="1878"/>
    </location>
</feature>
<feature type="helix" evidence="8">
    <location>
        <begin position="1879"/>
        <end position="1883"/>
    </location>
</feature>
<feature type="strand" evidence="8">
    <location>
        <begin position="1888"/>
        <end position="1892"/>
    </location>
</feature>
<feature type="helix" evidence="8">
    <location>
        <begin position="1906"/>
        <end position="1910"/>
    </location>
</feature>
<feature type="helix" evidence="8">
    <location>
        <begin position="1911"/>
        <end position="1913"/>
    </location>
</feature>
<feature type="strand" evidence="8">
    <location>
        <begin position="1919"/>
        <end position="1923"/>
    </location>
</feature>
<feature type="helix" evidence="8">
    <location>
        <begin position="1934"/>
        <end position="1946"/>
    </location>
</feature>
<feature type="turn" evidence="8">
    <location>
        <begin position="1950"/>
        <end position="1952"/>
    </location>
</feature>
<feature type="strand" evidence="8">
    <location>
        <begin position="1955"/>
        <end position="1961"/>
    </location>
</feature>
<feature type="helix" evidence="8">
    <location>
        <begin position="1965"/>
        <end position="1974"/>
    </location>
</feature>
<feature type="helix" evidence="8">
    <location>
        <begin position="1976"/>
        <end position="1978"/>
    </location>
</feature>
<feature type="strand" evidence="8">
    <location>
        <begin position="1979"/>
        <end position="1986"/>
    </location>
</feature>
<feature type="strand" evidence="8">
    <location>
        <begin position="1996"/>
        <end position="2004"/>
    </location>
</feature>
<feature type="helix" evidence="8">
    <location>
        <begin position="2016"/>
        <end position="2036"/>
    </location>
</feature>
<comment type="function">
    <text evidence="2">RNA-directed RNA polymerase that catalyzes the transcription of viral mRNAs, their capping and polyadenylation. The template is composed of the viral RNA tightly encapsidated by the nucleoprotein (N). The viral polymerase binds to the genomic RNA at the 3' leader promoter, and transcribes subsequently all viral mRNAs with a decreasing efficiency. The first gene is the most transcribed, and the last the least transcribed. The viral phosphoprotein acts as a processivity factor. Capping is concomitant with initiation of mRNA transcription. Indeed, a GDP polyribonucleotidyl transferase (PRNTase) adds the cap structure when the nascent RNA chain length has reached few nucleotides. Ribose 2'-O methylation of viral mRNA cap precedes and facilitates subsequent guanine-N-7 methylation, both activities being carried by the viral polymerase. Polyadenylation of mRNAs occur by a stuttering mechanism at a slipery stop site present at the end viral genes. After finishing transcription of a mRNA, the polymerase can resume transcription of the downstream gene.</text>
</comment>
<comment type="function">
    <text evidence="2">RNA-directed RNA polymerase that catalyzes the replication of viral genomic RNA. The template is composed of the viral RNA tightly encapsidated by the nucleoprotein (N). The replicase mode is dependent on intracellular N protein concentration. In this mode, the polymerase replicates the whole viral genome without recognizing transcriptional signals, and the replicated genome is not caped or polyadenylated.</text>
</comment>
<comment type="catalytic activity">
    <reaction evidence="4">
        <text>RNA(n) + a ribonucleoside 5'-triphosphate = RNA(n+1) + diphosphate</text>
        <dbReference type="Rhea" id="RHEA:21248"/>
        <dbReference type="Rhea" id="RHEA-COMP:14527"/>
        <dbReference type="Rhea" id="RHEA-COMP:17342"/>
        <dbReference type="ChEBI" id="CHEBI:33019"/>
        <dbReference type="ChEBI" id="CHEBI:61557"/>
        <dbReference type="ChEBI" id="CHEBI:140395"/>
        <dbReference type="EC" id="2.7.7.48"/>
    </reaction>
</comment>
<comment type="catalytic activity">
    <reaction evidence="2">
        <text>a 5'-end (5'-triphosphoguanosine)-adenylyl-adenylyl-cytidylyl-adenosine in mRNA + 2 S-adenosyl-L-methionine = a 5'-end (N(7)-methyl 5'-triphosphoguanosine)-(2'-O-methyladenylyl)-adenylyl-cytidylyl-adenosine in mRNA + 2 S-adenosyl-L-homocysteine + H(+)</text>
        <dbReference type="Rhea" id="RHEA:65376"/>
        <dbReference type="Rhea" id="RHEA-COMP:16797"/>
        <dbReference type="Rhea" id="RHEA-COMP:16798"/>
        <dbReference type="ChEBI" id="CHEBI:15378"/>
        <dbReference type="ChEBI" id="CHEBI:57856"/>
        <dbReference type="ChEBI" id="CHEBI:59789"/>
        <dbReference type="ChEBI" id="CHEBI:156483"/>
        <dbReference type="ChEBI" id="CHEBI:156484"/>
        <dbReference type="EC" id="2.1.1.375"/>
    </reaction>
</comment>
<comment type="catalytic activity">
    <reaction evidence="2">
        <text>a 5'-end (5'-triphosphoguanosine)-adenylyl-adenylyl-cytidylyl-adenosine in mRNA + S-adenosyl-L-methionine = a 5'-end (5'-triphosphoguanosine)-(2'-O-methyladenylyl)-adenylyl-cytidylyl-adenosine in mRNA + S-adenosyl-L-homocysteine + H(+)</text>
        <dbReference type="Rhea" id="RHEA:65380"/>
        <dbReference type="Rhea" id="RHEA-COMP:16797"/>
        <dbReference type="Rhea" id="RHEA-COMP:16801"/>
        <dbReference type="ChEBI" id="CHEBI:15378"/>
        <dbReference type="ChEBI" id="CHEBI:57856"/>
        <dbReference type="ChEBI" id="CHEBI:59789"/>
        <dbReference type="ChEBI" id="CHEBI:156482"/>
        <dbReference type="ChEBI" id="CHEBI:156484"/>
    </reaction>
</comment>
<comment type="catalytic activity">
    <reaction evidence="3">
        <text>a 5'-end triphospho-adenylyl-adenylyl-cytidylyl-adenosine in mRNA + GDP + H(+) = a 5'-end (5'-triphosphoguanosine)-adenylyl-adenylyl-cytidylyl-adenosine in mRNA + diphosphate</text>
        <dbReference type="Rhea" id="RHEA:65436"/>
        <dbReference type="Rhea" id="RHEA-COMP:16797"/>
        <dbReference type="Rhea" id="RHEA-COMP:16799"/>
        <dbReference type="ChEBI" id="CHEBI:15378"/>
        <dbReference type="ChEBI" id="CHEBI:33019"/>
        <dbReference type="ChEBI" id="CHEBI:58189"/>
        <dbReference type="ChEBI" id="CHEBI:156484"/>
        <dbReference type="ChEBI" id="CHEBI:156503"/>
        <dbReference type="EC" id="2.7.7.88"/>
    </reaction>
</comment>
<comment type="catalytic activity">
    <reaction evidence="2">
        <text>a 5'-end (5'-triphosphoguanosine)-(2'-O-methyladenylyl)-adenylyl-cytidylyl-adenosine in mRNA + S-adenosyl-L-methionine = a 5'-end (N(7)-methyl 5'-triphosphoguanosine)-(2'-O-methyladenylyl)-adenylyl-cytidylyl-adenosine in mRNA + S-adenosyl-L-homocysteine</text>
        <dbReference type="Rhea" id="RHEA:65440"/>
        <dbReference type="Rhea" id="RHEA-COMP:16798"/>
        <dbReference type="Rhea" id="RHEA-COMP:16801"/>
        <dbReference type="ChEBI" id="CHEBI:57856"/>
        <dbReference type="ChEBI" id="CHEBI:59789"/>
        <dbReference type="ChEBI" id="CHEBI:156482"/>
        <dbReference type="ChEBI" id="CHEBI:156483"/>
    </reaction>
</comment>
<comment type="catalytic activity">
    <reaction evidence="3">
        <text>GTP + H2O = GDP + phosphate + H(+)</text>
        <dbReference type="Rhea" id="RHEA:19669"/>
        <dbReference type="ChEBI" id="CHEBI:15377"/>
        <dbReference type="ChEBI" id="CHEBI:15378"/>
        <dbReference type="ChEBI" id="CHEBI:37565"/>
        <dbReference type="ChEBI" id="CHEBI:43474"/>
        <dbReference type="ChEBI" id="CHEBI:58189"/>
    </reaction>
</comment>
<comment type="subcellular location">
    <subcellularLocation>
        <location>Host cytoplasm</location>
    </subcellularLocation>
    <subcellularLocation>
        <location evidence="1">Virion</location>
    </subcellularLocation>
</comment>
<keyword id="KW-0002">3D-structure</keyword>
<keyword id="KW-0067">ATP-binding</keyword>
<keyword id="KW-1035">Host cytoplasm</keyword>
<keyword id="KW-0378">Hydrolase</keyword>
<keyword id="KW-0489">Methyltransferase</keyword>
<keyword id="KW-0506">mRNA capping</keyword>
<keyword id="KW-0507">mRNA processing</keyword>
<keyword id="KW-0511">Multifunctional enzyme</keyword>
<keyword id="KW-0547">Nucleotide-binding</keyword>
<keyword id="KW-0548">Nucleotidyltransferase</keyword>
<keyword id="KW-0696">RNA-directed RNA polymerase</keyword>
<keyword id="KW-0949">S-adenosyl-L-methionine</keyword>
<keyword id="KW-0808">Transferase</keyword>
<keyword id="KW-0693">Viral RNA replication</keyword>
<keyword id="KW-0946">Virion</keyword>
<evidence type="ECO:0000250" key="1"/>
<evidence type="ECO:0000250" key="2">
    <source>
        <dbReference type="UniProtKB" id="P03523"/>
    </source>
</evidence>
<evidence type="ECO:0000250" key="3">
    <source>
        <dbReference type="UniProtKB" id="P28887"/>
    </source>
</evidence>
<evidence type="ECO:0000255" key="4">
    <source>
        <dbReference type="PROSITE-ProRule" id="PRU00539"/>
    </source>
</evidence>
<evidence type="ECO:0000255" key="5">
    <source>
        <dbReference type="PROSITE-ProRule" id="PRU00923"/>
    </source>
</evidence>
<evidence type="ECO:0000256" key="6">
    <source>
        <dbReference type="SAM" id="MobiDB-lite"/>
    </source>
</evidence>
<evidence type="ECO:0000305" key="7"/>
<evidence type="ECO:0007829" key="8">
    <source>
        <dbReference type="PDB" id="6YU8"/>
    </source>
</evidence>
<name>L_EBOSU</name>
<organism>
    <name type="scientific">Sudan ebolavirus (strain Human/Uganda/Gulu/2000)</name>
    <name type="common">SEBOV</name>
    <name type="synonym">Sudan Ebola virus</name>
    <dbReference type="NCBI Taxonomy" id="386033"/>
    <lineage>
        <taxon>Viruses</taxon>
        <taxon>Riboviria</taxon>
        <taxon>Orthornavirae</taxon>
        <taxon>Negarnaviricota</taxon>
        <taxon>Haploviricotina</taxon>
        <taxon>Monjiviricetes</taxon>
        <taxon>Mononegavirales</taxon>
        <taxon>Filoviridae</taxon>
        <taxon>Orthoebolavirus</taxon>
        <taxon>Orthoebolavirus sudanense</taxon>
        <taxon>Sudan ebolavirus</taxon>
    </lineage>
</organism>